<keyword id="KW-0028">Amino-acid biosynthesis</keyword>
<keyword id="KW-0057">Aromatic amino acid biosynthesis</keyword>
<keyword id="KW-0210">Decarboxylase</keyword>
<keyword id="KW-0456">Lyase</keyword>
<keyword id="KW-0822">Tryptophan biosynthesis</keyword>
<gene>
    <name evidence="1" type="primary">trpC</name>
    <name type="ordered locus">BR1141</name>
    <name type="ordered locus">BS1330_I1137</name>
</gene>
<feature type="chain" id="PRO_0000154217" description="Indole-3-glycerol phosphate synthase">
    <location>
        <begin position="1"/>
        <end position="268"/>
    </location>
</feature>
<comment type="catalytic activity">
    <reaction evidence="1">
        <text>1-(2-carboxyphenylamino)-1-deoxy-D-ribulose 5-phosphate + H(+) = (1S,2R)-1-C-(indol-3-yl)glycerol 3-phosphate + CO2 + H2O</text>
        <dbReference type="Rhea" id="RHEA:23476"/>
        <dbReference type="ChEBI" id="CHEBI:15377"/>
        <dbReference type="ChEBI" id="CHEBI:15378"/>
        <dbReference type="ChEBI" id="CHEBI:16526"/>
        <dbReference type="ChEBI" id="CHEBI:58613"/>
        <dbReference type="ChEBI" id="CHEBI:58866"/>
        <dbReference type="EC" id="4.1.1.48"/>
    </reaction>
</comment>
<comment type="pathway">
    <text evidence="1">Amino-acid biosynthesis; L-tryptophan biosynthesis; L-tryptophan from chorismate: step 4/5.</text>
</comment>
<comment type="similarity">
    <text evidence="1">Belongs to the TrpC family.</text>
</comment>
<reference key="1">
    <citation type="journal article" date="2002" name="Proc. Natl. Acad. Sci. U.S.A.">
        <title>The Brucella suis genome reveals fundamental similarities between animal and plant pathogens and symbionts.</title>
        <authorList>
            <person name="Paulsen I.T."/>
            <person name="Seshadri R."/>
            <person name="Nelson K.E."/>
            <person name="Eisen J.A."/>
            <person name="Heidelberg J.F."/>
            <person name="Read T.D."/>
            <person name="Dodson R.J."/>
            <person name="Umayam L.A."/>
            <person name="Brinkac L.M."/>
            <person name="Beanan M.J."/>
            <person name="Daugherty S.C."/>
            <person name="DeBoy R.T."/>
            <person name="Durkin A.S."/>
            <person name="Kolonay J.F."/>
            <person name="Madupu R."/>
            <person name="Nelson W.C."/>
            <person name="Ayodeji B."/>
            <person name="Kraul M."/>
            <person name="Shetty J."/>
            <person name="Malek J.A."/>
            <person name="Van Aken S.E."/>
            <person name="Riedmuller S."/>
            <person name="Tettelin H."/>
            <person name="Gill S.R."/>
            <person name="White O."/>
            <person name="Salzberg S.L."/>
            <person name="Hoover D.L."/>
            <person name="Lindler L.E."/>
            <person name="Halling S.M."/>
            <person name="Boyle S.M."/>
            <person name="Fraser C.M."/>
        </authorList>
    </citation>
    <scope>NUCLEOTIDE SEQUENCE [LARGE SCALE GENOMIC DNA]</scope>
    <source>
        <strain>1330</strain>
    </source>
</reference>
<reference key="2">
    <citation type="journal article" date="2011" name="J. Bacteriol.">
        <title>Revised genome sequence of Brucella suis 1330.</title>
        <authorList>
            <person name="Tae H."/>
            <person name="Shallom S."/>
            <person name="Settlage R."/>
            <person name="Preston D."/>
            <person name="Adams L.G."/>
            <person name="Garner H.R."/>
        </authorList>
    </citation>
    <scope>NUCLEOTIDE SEQUENCE [LARGE SCALE GENOMIC DNA]</scope>
    <source>
        <strain>1330</strain>
    </source>
</reference>
<evidence type="ECO:0000255" key="1">
    <source>
        <dbReference type="HAMAP-Rule" id="MF_00134"/>
    </source>
</evidence>
<accession>P66989</accession>
<accession>G0KA63</accession>
<accession>Q8G0F4</accession>
<accession>Q8YHF8</accession>
<name>TRPC_BRUSU</name>
<sequence length="268" mass="29269">MSTDILRKIEAYKREEIAAAKARLALDELKARTRDQSAPRGFLKALEAKRAAGQFALIAEIKKASPSKGLIRPDFDPPALAKAYEEGGAACLSVLTDTPSFQGAPEFLTAARQACSLPALRKDFLFDPYQVYEARSWGADCILIIMASVDDDLAKELEDTAFALGMDALIEVHDEAEMERALKLSSRLLGVNNRNLRSFEVNLAVSERLAKMAPSDRLLVGESGIFTHEDCLRLEKSGIGTFLIGESLMRQHDVAAATRALLTGAEKL</sequence>
<proteinExistence type="inferred from homology"/>
<dbReference type="EC" id="4.1.1.48" evidence="1"/>
<dbReference type="EMBL" id="AE014291">
    <property type="protein sequence ID" value="AAN30061.1"/>
    <property type="molecule type" value="Genomic_DNA"/>
</dbReference>
<dbReference type="EMBL" id="CP002997">
    <property type="protein sequence ID" value="AEM18479.1"/>
    <property type="molecule type" value="Genomic_DNA"/>
</dbReference>
<dbReference type="RefSeq" id="WP_002964269.1">
    <property type="nucleotide sequence ID" value="NZ_KN046804.1"/>
</dbReference>
<dbReference type="SMR" id="P66989"/>
<dbReference type="GeneID" id="93016523"/>
<dbReference type="KEGG" id="bms:BR1141"/>
<dbReference type="KEGG" id="bsi:BS1330_I1137"/>
<dbReference type="PATRIC" id="fig|204722.21.peg.1979"/>
<dbReference type="HOGENOM" id="CLU_034247_2_0_5"/>
<dbReference type="PhylomeDB" id="P66989"/>
<dbReference type="UniPathway" id="UPA00035">
    <property type="reaction ID" value="UER00043"/>
</dbReference>
<dbReference type="Proteomes" id="UP000007104">
    <property type="component" value="Chromosome I"/>
</dbReference>
<dbReference type="GO" id="GO:0004425">
    <property type="term" value="F:indole-3-glycerol-phosphate synthase activity"/>
    <property type="evidence" value="ECO:0007669"/>
    <property type="project" value="UniProtKB-UniRule"/>
</dbReference>
<dbReference type="GO" id="GO:0004640">
    <property type="term" value="F:phosphoribosylanthranilate isomerase activity"/>
    <property type="evidence" value="ECO:0007669"/>
    <property type="project" value="TreeGrafter"/>
</dbReference>
<dbReference type="GO" id="GO:0000162">
    <property type="term" value="P:L-tryptophan biosynthetic process"/>
    <property type="evidence" value="ECO:0007669"/>
    <property type="project" value="UniProtKB-UniRule"/>
</dbReference>
<dbReference type="CDD" id="cd00331">
    <property type="entry name" value="IGPS"/>
    <property type="match status" value="1"/>
</dbReference>
<dbReference type="FunFam" id="3.20.20.70:FF:000024">
    <property type="entry name" value="Indole-3-glycerol phosphate synthase"/>
    <property type="match status" value="1"/>
</dbReference>
<dbReference type="Gene3D" id="3.20.20.70">
    <property type="entry name" value="Aldolase class I"/>
    <property type="match status" value="1"/>
</dbReference>
<dbReference type="HAMAP" id="MF_00134_B">
    <property type="entry name" value="IGPS_B"/>
    <property type="match status" value="1"/>
</dbReference>
<dbReference type="InterPro" id="IPR013785">
    <property type="entry name" value="Aldolase_TIM"/>
</dbReference>
<dbReference type="InterPro" id="IPR045186">
    <property type="entry name" value="Indole-3-glycerol_P_synth"/>
</dbReference>
<dbReference type="InterPro" id="IPR013798">
    <property type="entry name" value="Indole-3-glycerol_P_synth_dom"/>
</dbReference>
<dbReference type="InterPro" id="IPR001468">
    <property type="entry name" value="Indole-3-GlycerolPSynthase_CS"/>
</dbReference>
<dbReference type="InterPro" id="IPR011060">
    <property type="entry name" value="RibuloseP-bd_barrel"/>
</dbReference>
<dbReference type="NCBIfam" id="NF001370">
    <property type="entry name" value="PRK00278.1-2"/>
    <property type="match status" value="1"/>
</dbReference>
<dbReference type="NCBIfam" id="NF001373">
    <property type="entry name" value="PRK00278.1-6"/>
    <property type="match status" value="1"/>
</dbReference>
<dbReference type="NCBIfam" id="NF001377">
    <property type="entry name" value="PRK00278.2-4"/>
    <property type="match status" value="1"/>
</dbReference>
<dbReference type="PANTHER" id="PTHR22854:SF2">
    <property type="entry name" value="INDOLE-3-GLYCEROL-PHOSPHATE SYNTHASE"/>
    <property type="match status" value="1"/>
</dbReference>
<dbReference type="PANTHER" id="PTHR22854">
    <property type="entry name" value="TRYPTOPHAN BIOSYNTHESIS PROTEIN"/>
    <property type="match status" value="1"/>
</dbReference>
<dbReference type="Pfam" id="PF00218">
    <property type="entry name" value="IGPS"/>
    <property type="match status" value="1"/>
</dbReference>
<dbReference type="SUPFAM" id="SSF51366">
    <property type="entry name" value="Ribulose-phoshate binding barrel"/>
    <property type="match status" value="1"/>
</dbReference>
<dbReference type="PROSITE" id="PS00614">
    <property type="entry name" value="IGPS"/>
    <property type="match status" value="1"/>
</dbReference>
<protein>
    <recommendedName>
        <fullName evidence="1">Indole-3-glycerol phosphate synthase</fullName>
        <shortName evidence="1">IGPS</shortName>
        <ecNumber evidence="1">4.1.1.48</ecNumber>
    </recommendedName>
</protein>
<organism>
    <name type="scientific">Brucella suis biovar 1 (strain 1330)</name>
    <dbReference type="NCBI Taxonomy" id="204722"/>
    <lineage>
        <taxon>Bacteria</taxon>
        <taxon>Pseudomonadati</taxon>
        <taxon>Pseudomonadota</taxon>
        <taxon>Alphaproteobacteria</taxon>
        <taxon>Hyphomicrobiales</taxon>
        <taxon>Brucellaceae</taxon>
        <taxon>Brucella/Ochrobactrum group</taxon>
        <taxon>Brucella</taxon>
    </lineage>
</organism>